<dbReference type="EMBL" id="AF102623">
    <property type="protein sequence ID" value="AAD14629.1"/>
    <property type="molecule type" value="Genomic_DNA"/>
</dbReference>
<dbReference type="SMR" id="O93657"/>
<dbReference type="BioCyc" id="MetaCyc:MONOMER-12211"/>
<dbReference type="UniPathway" id="UPA00644"/>
<dbReference type="GO" id="GO:0005829">
    <property type="term" value="C:cytosol"/>
    <property type="evidence" value="ECO:0007669"/>
    <property type="project" value="TreeGrafter"/>
</dbReference>
<dbReference type="GO" id="GO:0031419">
    <property type="term" value="F:cobalamin binding"/>
    <property type="evidence" value="ECO:0007669"/>
    <property type="project" value="InterPro"/>
</dbReference>
<dbReference type="GO" id="GO:0050897">
    <property type="term" value="F:cobalt ion binding"/>
    <property type="evidence" value="ECO:0007669"/>
    <property type="project" value="InterPro"/>
</dbReference>
<dbReference type="GO" id="GO:0008705">
    <property type="term" value="F:methionine synthase activity"/>
    <property type="evidence" value="ECO:0007669"/>
    <property type="project" value="TreeGrafter"/>
</dbReference>
<dbReference type="GO" id="GO:0050667">
    <property type="term" value="P:homocysteine metabolic process"/>
    <property type="evidence" value="ECO:0007669"/>
    <property type="project" value="TreeGrafter"/>
</dbReference>
<dbReference type="GO" id="GO:0015948">
    <property type="term" value="P:methanogenesis"/>
    <property type="evidence" value="ECO:0007669"/>
    <property type="project" value="UniProtKB-KW"/>
</dbReference>
<dbReference type="GO" id="GO:0046653">
    <property type="term" value="P:tetrahydrofolate metabolic process"/>
    <property type="evidence" value="ECO:0007669"/>
    <property type="project" value="TreeGrafter"/>
</dbReference>
<dbReference type="CDD" id="cd02070">
    <property type="entry name" value="corrinoid_protein_B12-BD"/>
    <property type="match status" value="1"/>
</dbReference>
<dbReference type="FunFam" id="3.40.50.280:FF:000003">
    <property type="entry name" value="Dimethylamine methyltransferase corrinoid protein"/>
    <property type="match status" value="1"/>
</dbReference>
<dbReference type="FunFam" id="1.10.1240.10:FF:000004">
    <property type="entry name" value="Monomethylamine methyltransferase corrinoid protein"/>
    <property type="match status" value="1"/>
</dbReference>
<dbReference type="Gene3D" id="3.40.50.280">
    <property type="entry name" value="Cobalamin-binding domain"/>
    <property type="match status" value="1"/>
</dbReference>
<dbReference type="Gene3D" id="1.10.1240.10">
    <property type="entry name" value="Methionine synthase domain"/>
    <property type="match status" value="1"/>
</dbReference>
<dbReference type="InterPro" id="IPR003759">
    <property type="entry name" value="Cbl-bd_cap"/>
</dbReference>
<dbReference type="InterPro" id="IPR006158">
    <property type="entry name" value="Cobalamin-bd"/>
</dbReference>
<dbReference type="InterPro" id="IPR036724">
    <property type="entry name" value="Cobalamin-bd_sf"/>
</dbReference>
<dbReference type="InterPro" id="IPR012741">
    <property type="entry name" value="Corrinoid_p"/>
</dbReference>
<dbReference type="InterPro" id="IPR048095">
    <property type="entry name" value="Dimeth_corrin_MtbC"/>
</dbReference>
<dbReference type="InterPro" id="IPR050554">
    <property type="entry name" value="Met_Synthase/Corrinoid"/>
</dbReference>
<dbReference type="InterPro" id="IPR036594">
    <property type="entry name" value="Meth_synthase_dom"/>
</dbReference>
<dbReference type="NCBIfam" id="NF041607">
    <property type="entry name" value="dimeth_corrin_MtbC"/>
    <property type="match status" value="1"/>
</dbReference>
<dbReference type="NCBIfam" id="TIGR02370">
    <property type="entry name" value="pyl_corrinoid"/>
    <property type="match status" value="1"/>
</dbReference>
<dbReference type="PANTHER" id="PTHR45833">
    <property type="entry name" value="METHIONINE SYNTHASE"/>
    <property type="match status" value="1"/>
</dbReference>
<dbReference type="PANTHER" id="PTHR45833:SF1">
    <property type="entry name" value="METHIONINE SYNTHASE"/>
    <property type="match status" value="1"/>
</dbReference>
<dbReference type="Pfam" id="PF02310">
    <property type="entry name" value="B12-binding"/>
    <property type="match status" value="1"/>
</dbReference>
<dbReference type="Pfam" id="PF02607">
    <property type="entry name" value="B12-binding_2"/>
    <property type="match status" value="1"/>
</dbReference>
<dbReference type="SMART" id="SM01018">
    <property type="entry name" value="B12-binding_2"/>
    <property type="match status" value="1"/>
</dbReference>
<dbReference type="SUPFAM" id="SSF52242">
    <property type="entry name" value="Cobalamin (vitamin B12)-binding domain"/>
    <property type="match status" value="1"/>
</dbReference>
<dbReference type="SUPFAM" id="SSF47644">
    <property type="entry name" value="Methionine synthase domain"/>
    <property type="match status" value="1"/>
</dbReference>
<dbReference type="PROSITE" id="PS51332">
    <property type="entry name" value="B12_BINDING"/>
    <property type="match status" value="1"/>
</dbReference>
<dbReference type="PROSITE" id="PS51337">
    <property type="entry name" value="B12_BINDING_NTER"/>
    <property type="match status" value="1"/>
</dbReference>
<accession>O93657</accession>
<gene>
    <name evidence="6" type="primary">mtbC</name>
</gene>
<evidence type="ECO:0000250" key="1"/>
<evidence type="ECO:0000255" key="2">
    <source>
        <dbReference type="PROSITE-ProRule" id="PRU00666"/>
    </source>
</evidence>
<evidence type="ECO:0000255" key="3">
    <source>
        <dbReference type="PROSITE-ProRule" id="PRU00667"/>
    </source>
</evidence>
<evidence type="ECO:0000269" key="4">
    <source>
    </source>
</evidence>
<evidence type="ECO:0000269" key="5">
    <source>
    </source>
</evidence>
<evidence type="ECO:0000303" key="6">
    <source>
    </source>
</evidence>
<evidence type="ECO:0000305" key="7"/>
<evidence type="ECO:0000305" key="8">
    <source>
    </source>
</evidence>
<protein>
    <recommendedName>
        <fullName>Dimethylamine corrinoid protein</fullName>
    </recommendedName>
</protein>
<keyword id="KW-0170">Cobalt</keyword>
<keyword id="KW-0903">Direct protein sequencing</keyword>
<keyword id="KW-0479">Metal-binding</keyword>
<keyword id="KW-0484">Methanogenesis</keyword>
<keyword id="KW-0677">Repeat</keyword>
<name>MTBC_METBA</name>
<reference key="1">
    <citation type="journal article" date="2000" name="J. Bacteriol.">
        <title>The trimethylamine methyltransferase gene and multiple dimethylamine methyltransferase genes of Methanosarcina barkeri contain in-frame and read-through amber codons.</title>
        <authorList>
            <person name="Paul L."/>
            <person name="Ferguson D.J. Jr."/>
            <person name="Krzycki J.A."/>
        </authorList>
    </citation>
    <scope>NUCLEOTIDE SEQUENCE [GENOMIC DNA]</scope>
    <scope>PATHWAY</scope>
    <scope>INDUCTION BY TRIMETHYLAMINE</scope>
    <source>
        <strain>ATCC 43569 / MS / DSM 800 / JCM 10043 / NBRC 100474</strain>
    </source>
</reference>
<reference key="2">
    <citation type="journal article" date="2000" name="J. Biol. Chem.">
        <title>Reconstitution of dimethylamine:coenzyme M methyl transfer with a discrete corrinoid protein and two methyltransferases purified from Methanosarcina barkeri.</title>
        <authorList>
            <person name="Ferguson D.J. Jr."/>
            <person name="Gorlatova N."/>
            <person name="Grahame D.A."/>
            <person name="Krzycki J.A."/>
        </authorList>
    </citation>
    <scope>PROTEIN SEQUENCE OF 2-16</scope>
    <scope>FUNCTION</scope>
    <scope>SUBUNIT</scope>
    <source>
        <strain>ATCC 43569 / MS / DSM 800 / JCM 10043 / NBRC 100474</strain>
    </source>
</reference>
<proteinExistence type="evidence at protein level"/>
<sequence length="213" mass="22504">MSKEELLQELADAIISCKKDTVLAVVEKAKGELEPSEIIEKGLAAGMNEVGVRFERGKLFLPHVMMAADAMTAGVAALKDLMPEGASGSKLGVIVNGTVEGDVHDIGKAIVSTMLQSAGFEVHDIGRDVPIRNFIEKAKEVNADMIGISALMTTTLQGQKSVIELLKEEGLRDKVKVMVGGAPATQAWADKIGADCYAENATEAVAKAKELLA</sequence>
<organism>
    <name type="scientific">Methanosarcina barkeri</name>
    <dbReference type="NCBI Taxonomy" id="2208"/>
    <lineage>
        <taxon>Archaea</taxon>
        <taxon>Methanobacteriati</taxon>
        <taxon>Methanobacteriota</taxon>
        <taxon>Stenosarchaea group</taxon>
        <taxon>Methanomicrobia</taxon>
        <taxon>Methanosarcinales</taxon>
        <taxon>Methanosarcinaceae</taxon>
        <taxon>Methanosarcina</taxon>
    </lineage>
</organism>
<comment type="function">
    <text evidence="5">Acts as a methyl group carrier between MtbB1 and MtbA. Binds 1 corrinoid cofactor per protein, is subsequently demethylated by MtbA.</text>
</comment>
<comment type="pathway">
    <text evidence="8">One-carbon metabolism; methanogenesis from dimethylamine.</text>
</comment>
<comment type="subunit">
    <text evidence="5">Copurifies with MtbA.</text>
</comment>
<comment type="induction">
    <text evidence="4">Induced by growth on trimethylamine but not methanol or monomethylamine. Part of the mtbC-mttB-mttC and mtbC-mttB-mttC-mttP-mtbB1 operons.</text>
</comment>
<comment type="similarity">
    <text evidence="7">Belongs to the methylamine corrinoid protein family.</text>
</comment>
<feature type="initiator methionine" description="Removed" evidence="5">
    <location>
        <position position="1"/>
    </location>
</feature>
<feature type="chain" id="PRO_0000216473" description="Dimethylamine corrinoid protein">
    <location>
        <begin position="2"/>
        <end position="213"/>
    </location>
</feature>
<feature type="domain" description="B12-binding N-terminal" evidence="3">
    <location>
        <begin position="1"/>
        <end position="90"/>
    </location>
</feature>
<feature type="domain" description="B12-binding" evidence="2">
    <location>
        <begin position="91"/>
        <end position="213"/>
    </location>
</feature>
<feature type="binding site" description="axial binding residue" evidence="1">
    <location>
        <position position="104"/>
    </location>
    <ligand>
        <name>methylcob(III)alamin</name>
        <dbReference type="ChEBI" id="CHEBI:28115"/>
    </ligand>
    <ligandPart>
        <name>Co</name>
        <dbReference type="ChEBI" id="CHEBI:27638"/>
    </ligandPart>
</feature>